<dbReference type="EC" id="5.4.2.10" evidence="1"/>
<dbReference type="EMBL" id="CP000910">
    <property type="protein sequence ID" value="ABY23471.1"/>
    <property type="molecule type" value="Genomic_DNA"/>
</dbReference>
<dbReference type="RefSeq" id="WP_012245143.1">
    <property type="nucleotide sequence ID" value="NC_010168.1"/>
</dbReference>
<dbReference type="SMR" id="A9WMF8"/>
<dbReference type="STRING" id="288705.RSal33209_1735"/>
<dbReference type="KEGG" id="rsa:RSal33209_1735"/>
<dbReference type="eggNOG" id="COG1109">
    <property type="taxonomic scope" value="Bacteria"/>
</dbReference>
<dbReference type="HOGENOM" id="CLU_016950_7_0_11"/>
<dbReference type="Proteomes" id="UP000002007">
    <property type="component" value="Chromosome"/>
</dbReference>
<dbReference type="GO" id="GO:0005829">
    <property type="term" value="C:cytosol"/>
    <property type="evidence" value="ECO:0007669"/>
    <property type="project" value="TreeGrafter"/>
</dbReference>
<dbReference type="GO" id="GO:0000287">
    <property type="term" value="F:magnesium ion binding"/>
    <property type="evidence" value="ECO:0007669"/>
    <property type="project" value="UniProtKB-UniRule"/>
</dbReference>
<dbReference type="GO" id="GO:0008966">
    <property type="term" value="F:phosphoglucosamine mutase activity"/>
    <property type="evidence" value="ECO:0007669"/>
    <property type="project" value="UniProtKB-UniRule"/>
</dbReference>
<dbReference type="GO" id="GO:0004615">
    <property type="term" value="F:phosphomannomutase activity"/>
    <property type="evidence" value="ECO:0007669"/>
    <property type="project" value="TreeGrafter"/>
</dbReference>
<dbReference type="GO" id="GO:0005975">
    <property type="term" value="P:carbohydrate metabolic process"/>
    <property type="evidence" value="ECO:0007669"/>
    <property type="project" value="InterPro"/>
</dbReference>
<dbReference type="GO" id="GO:0009252">
    <property type="term" value="P:peptidoglycan biosynthetic process"/>
    <property type="evidence" value="ECO:0007669"/>
    <property type="project" value="TreeGrafter"/>
</dbReference>
<dbReference type="GO" id="GO:0006048">
    <property type="term" value="P:UDP-N-acetylglucosamine biosynthetic process"/>
    <property type="evidence" value="ECO:0007669"/>
    <property type="project" value="TreeGrafter"/>
</dbReference>
<dbReference type="CDD" id="cd05802">
    <property type="entry name" value="GlmM"/>
    <property type="match status" value="1"/>
</dbReference>
<dbReference type="FunFam" id="3.30.310.50:FF:000001">
    <property type="entry name" value="Phosphoglucosamine mutase"/>
    <property type="match status" value="1"/>
</dbReference>
<dbReference type="FunFam" id="3.40.120.10:FF:000001">
    <property type="entry name" value="Phosphoglucosamine mutase"/>
    <property type="match status" value="1"/>
</dbReference>
<dbReference type="FunFam" id="3.40.120.10:FF:000002">
    <property type="entry name" value="Phosphoglucosamine mutase"/>
    <property type="match status" value="1"/>
</dbReference>
<dbReference type="Gene3D" id="3.40.120.10">
    <property type="entry name" value="Alpha-D-Glucose-1,6-Bisphosphate, subunit A, domain 3"/>
    <property type="match status" value="3"/>
</dbReference>
<dbReference type="Gene3D" id="3.30.310.50">
    <property type="entry name" value="Alpha-D-phosphohexomutase, C-terminal domain"/>
    <property type="match status" value="1"/>
</dbReference>
<dbReference type="HAMAP" id="MF_01554_B">
    <property type="entry name" value="GlmM_B"/>
    <property type="match status" value="1"/>
</dbReference>
<dbReference type="InterPro" id="IPR005844">
    <property type="entry name" value="A-D-PHexomutase_a/b/a-I"/>
</dbReference>
<dbReference type="InterPro" id="IPR016055">
    <property type="entry name" value="A-D-PHexomutase_a/b/a-I/II/III"/>
</dbReference>
<dbReference type="InterPro" id="IPR005845">
    <property type="entry name" value="A-D-PHexomutase_a/b/a-II"/>
</dbReference>
<dbReference type="InterPro" id="IPR005846">
    <property type="entry name" value="A-D-PHexomutase_a/b/a-III"/>
</dbReference>
<dbReference type="InterPro" id="IPR005843">
    <property type="entry name" value="A-D-PHexomutase_C"/>
</dbReference>
<dbReference type="InterPro" id="IPR036900">
    <property type="entry name" value="A-D-PHexomutase_C_sf"/>
</dbReference>
<dbReference type="InterPro" id="IPR016066">
    <property type="entry name" value="A-D-PHexomutase_CS"/>
</dbReference>
<dbReference type="InterPro" id="IPR005841">
    <property type="entry name" value="Alpha-D-phosphohexomutase_SF"/>
</dbReference>
<dbReference type="InterPro" id="IPR006352">
    <property type="entry name" value="GlmM_bact"/>
</dbReference>
<dbReference type="InterPro" id="IPR050060">
    <property type="entry name" value="Phosphoglucosamine_mutase"/>
</dbReference>
<dbReference type="NCBIfam" id="TIGR01455">
    <property type="entry name" value="glmM"/>
    <property type="match status" value="1"/>
</dbReference>
<dbReference type="PANTHER" id="PTHR42946:SF1">
    <property type="entry name" value="PHOSPHOGLUCOMUTASE (ALPHA-D-GLUCOSE-1,6-BISPHOSPHATE-DEPENDENT)"/>
    <property type="match status" value="1"/>
</dbReference>
<dbReference type="PANTHER" id="PTHR42946">
    <property type="entry name" value="PHOSPHOHEXOSE MUTASE"/>
    <property type="match status" value="1"/>
</dbReference>
<dbReference type="Pfam" id="PF02878">
    <property type="entry name" value="PGM_PMM_I"/>
    <property type="match status" value="1"/>
</dbReference>
<dbReference type="Pfam" id="PF02879">
    <property type="entry name" value="PGM_PMM_II"/>
    <property type="match status" value="1"/>
</dbReference>
<dbReference type="Pfam" id="PF02880">
    <property type="entry name" value="PGM_PMM_III"/>
    <property type="match status" value="1"/>
</dbReference>
<dbReference type="Pfam" id="PF00408">
    <property type="entry name" value="PGM_PMM_IV"/>
    <property type="match status" value="1"/>
</dbReference>
<dbReference type="PRINTS" id="PR00509">
    <property type="entry name" value="PGMPMM"/>
</dbReference>
<dbReference type="SUPFAM" id="SSF55957">
    <property type="entry name" value="Phosphoglucomutase, C-terminal domain"/>
    <property type="match status" value="1"/>
</dbReference>
<dbReference type="SUPFAM" id="SSF53738">
    <property type="entry name" value="Phosphoglucomutase, first 3 domains"/>
    <property type="match status" value="2"/>
</dbReference>
<dbReference type="PROSITE" id="PS00710">
    <property type="entry name" value="PGM_PMM"/>
    <property type="match status" value="1"/>
</dbReference>
<comment type="function">
    <text evidence="1">Catalyzes the conversion of glucosamine-6-phosphate to glucosamine-1-phosphate.</text>
</comment>
<comment type="catalytic activity">
    <reaction evidence="1">
        <text>alpha-D-glucosamine 1-phosphate = D-glucosamine 6-phosphate</text>
        <dbReference type="Rhea" id="RHEA:23424"/>
        <dbReference type="ChEBI" id="CHEBI:58516"/>
        <dbReference type="ChEBI" id="CHEBI:58725"/>
        <dbReference type="EC" id="5.4.2.10"/>
    </reaction>
</comment>
<comment type="cofactor">
    <cofactor evidence="1">
        <name>Mg(2+)</name>
        <dbReference type="ChEBI" id="CHEBI:18420"/>
    </cofactor>
    <text evidence="1">Binds 1 Mg(2+) ion per subunit.</text>
</comment>
<comment type="PTM">
    <text evidence="1">Activated by phosphorylation.</text>
</comment>
<comment type="similarity">
    <text evidence="1">Belongs to the phosphohexose mutase family.</text>
</comment>
<protein>
    <recommendedName>
        <fullName evidence="1">Phosphoglucosamine mutase</fullName>
        <ecNumber evidence="1">5.4.2.10</ecNumber>
    </recommendedName>
</protein>
<keyword id="KW-0413">Isomerase</keyword>
<keyword id="KW-0460">Magnesium</keyword>
<keyword id="KW-0479">Metal-binding</keyword>
<keyword id="KW-0597">Phosphoprotein</keyword>
<keyword id="KW-1185">Reference proteome</keyword>
<organism>
    <name type="scientific">Renibacterium salmoninarum (strain ATCC 33209 / DSM 20767 / JCM 11484 / NBRC 15589 / NCIMB 2235)</name>
    <dbReference type="NCBI Taxonomy" id="288705"/>
    <lineage>
        <taxon>Bacteria</taxon>
        <taxon>Bacillati</taxon>
        <taxon>Actinomycetota</taxon>
        <taxon>Actinomycetes</taxon>
        <taxon>Micrococcales</taxon>
        <taxon>Micrococcaceae</taxon>
        <taxon>Renibacterium</taxon>
    </lineage>
</organism>
<accession>A9WMF8</accession>
<feature type="chain" id="PRO_1000087774" description="Phosphoglucosamine mutase">
    <location>
        <begin position="1"/>
        <end position="450"/>
    </location>
</feature>
<feature type="active site" description="Phosphoserine intermediate" evidence="1">
    <location>
        <position position="104"/>
    </location>
</feature>
<feature type="binding site" description="via phosphate group" evidence="1">
    <location>
        <position position="104"/>
    </location>
    <ligand>
        <name>Mg(2+)</name>
        <dbReference type="ChEBI" id="CHEBI:18420"/>
    </ligand>
</feature>
<feature type="binding site" evidence="1">
    <location>
        <position position="241"/>
    </location>
    <ligand>
        <name>Mg(2+)</name>
        <dbReference type="ChEBI" id="CHEBI:18420"/>
    </ligand>
</feature>
<feature type="binding site" evidence="1">
    <location>
        <position position="243"/>
    </location>
    <ligand>
        <name>Mg(2+)</name>
        <dbReference type="ChEBI" id="CHEBI:18420"/>
    </ligand>
</feature>
<feature type="binding site" evidence="1">
    <location>
        <position position="245"/>
    </location>
    <ligand>
        <name>Mg(2+)</name>
        <dbReference type="ChEBI" id="CHEBI:18420"/>
    </ligand>
</feature>
<feature type="modified residue" description="Phosphoserine" evidence="1">
    <location>
        <position position="104"/>
    </location>
</feature>
<evidence type="ECO:0000255" key="1">
    <source>
        <dbReference type="HAMAP-Rule" id="MF_01554"/>
    </source>
</evidence>
<proteinExistence type="inferred from homology"/>
<name>GLMM_RENSM</name>
<gene>
    <name evidence="1" type="primary">glmM</name>
    <name type="ordered locus">RSal33209_1735</name>
</gene>
<sequence length="450" mass="46771">MSRLFGTDGVRGLANGLLTAELALSLAQAAAVVLGHDQLAEGKRPRAVIARDPRASGEFIGAAVEAGLASAGVDVYDAGVLPTPAAAYLIASLDADFGVMISASHNPAADNGIKFFARGGQKLADDAEDAIEAQLKVKPHRPTGVGVGRIQRFSDAEDRYILHLLTTLPHRLDGLTVVLDCAHGAASGCSPQVFKDAGAKVIVIGAEPDGLNINDGVGSTHLGPLQEAVVANGADLGIAHDGDADRCLAVDHEGNVIDGDQIMAILALALKADGKLKDNVLVATVMSNLGLKIALREAGISIRETAVGDRYVLEAMRQGGFNLGGEQSGHVIFADHATTGDGVLTGLQLAAQVARTRRSLQQLATAMTKLPQLMINVKGVDKTRAQTDEGVREAVARAEQELGQTGRVLLRPSGTEALVRVMVEAGDMATATRICEDLAEVIEKRLALAV</sequence>
<reference key="1">
    <citation type="journal article" date="2008" name="J. Bacteriol.">
        <title>Genome sequence of the fish pathogen Renibacterium salmoninarum suggests reductive evolution away from an environmental Arthrobacter ancestor.</title>
        <authorList>
            <person name="Wiens G.D."/>
            <person name="Rockey D.D."/>
            <person name="Wu Z."/>
            <person name="Chang J."/>
            <person name="Levy R."/>
            <person name="Crane S."/>
            <person name="Chen D.S."/>
            <person name="Capri G.R."/>
            <person name="Burnett J.R."/>
            <person name="Sudheesh P.S."/>
            <person name="Schipma M.J."/>
            <person name="Burd H."/>
            <person name="Bhattacharyya A."/>
            <person name="Rhodes L.D."/>
            <person name="Kaul R."/>
            <person name="Strom M.S."/>
        </authorList>
    </citation>
    <scope>NUCLEOTIDE SEQUENCE [LARGE SCALE GENOMIC DNA]</scope>
    <source>
        <strain>ATCC 33209 / DSM 20767 / JCM 11484 / NBRC 15589 / NCIMB 2235</strain>
    </source>
</reference>